<organism>
    <name type="scientific">Nitratidesulfovibrio vulgaris (strain DSM 19637 / Miyazaki F)</name>
    <name type="common">Desulfovibrio vulgaris</name>
    <dbReference type="NCBI Taxonomy" id="883"/>
    <lineage>
        <taxon>Bacteria</taxon>
        <taxon>Pseudomonadati</taxon>
        <taxon>Thermodesulfobacteriota</taxon>
        <taxon>Desulfovibrionia</taxon>
        <taxon>Desulfovibrionales</taxon>
        <taxon>Desulfovibrionaceae</taxon>
        <taxon>Nitratidesulfovibrio</taxon>
    </lineage>
</organism>
<gene>
    <name evidence="1" type="primary">infC</name>
    <name type="ordered locus">DvMF_0983</name>
</gene>
<evidence type="ECO:0000255" key="1">
    <source>
        <dbReference type="HAMAP-Rule" id="MF_00080"/>
    </source>
</evidence>
<proteinExistence type="inferred from homology"/>
<feature type="chain" id="PRO_1000117101" description="Translation initiation factor IF-3">
    <location>
        <begin position="1"/>
        <end position="176"/>
    </location>
</feature>
<sequence>MRRDIPQDTVRRNEQVRAREVRVIGADGEQLGILSRNDAIAHAKELGLDLVEVAATADPPVCRVMDYGRFKYEQQKKKAEAKKNQTVIQIKEIKVRPKTDDHDYDTKVRHIRRFIEEGDRCKVTVFFRGREIVHKDRGQSILDRIVEDTKDIAKMDQEARAEGRTLFMMLAPLPKK</sequence>
<comment type="function">
    <text evidence="1">IF-3 binds to the 30S ribosomal subunit and shifts the equilibrium between 70S ribosomes and their 50S and 30S subunits in favor of the free subunits, thus enhancing the availability of 30S subunits on which protein synthesis initiation begins.</text>
</comment>
<comment type="subunit">
    <text evidence="1">Monomer.</text>
</comment>
<comment type="subcellular location">
    <subcellularLocation>
        <location evidence="1">Cytoplasm</location>
    </subcellularLocation>
</comment>
<comment type="similarity">
    <text evidence="1">Belongs to the IF-3 family.</text>
</comment>
<dbReference type="EMBL" id="CP001197">
    <property type="protein sequence ID" value="ACL07938.1"/>
    <property type="molecule type" value="Genomic_DNA"/>
</dbReference>
<dbReference type="SMR" id="B8DPN1"/>
<dbReference type="STRING" id="883.DvMF_0983"/>
<dbReference type="KEGG" id="dvm:DvMF_0983"/>
<dbReference type="eggNOG" id="COG0290">
    <property type="taxonomic scope" value="Bacteria"/>
</dbReference>
<dbReference type="HOGENOM" id="CLU_054919_3_2_7"/>
<dbReference type="OrthoDB" id="9806014at2"/>
<dbReference type="GO" id="GO:0005829">
    <property type="term" value="C:cytosol"/>
    <property type="evidence" value="ECO:0007669"/>
    <property type="project" value="TreeGrafter"/>
</dbReference>
<dbReference type="GO" id="GO:0016020">
    <property type="term" value="C:membrane"/>
    <property type="evidence" value="ECO:0007669"/>
    <property type="project" value="TreeGrafter"/>
</dbReference>
<dbReference type="GO" id="GO:0043022">
    <property type="term" value="F:ribosome binding"/>
    <property type="evidence" value="ECO:0007669"/>
    <property type="project" value="TreeGrafter"/>
</dbReference>
<dbReference type="GO" id="GO:0003743">
    <property type="term" value="F:translation initiation factor activity"/>
    <property type="evidence" value="ECO:0007669"/>
    <property type="project" value="UniProtKB-UniRule"/>
</dbReference>
<dbReference type="GO" id="GO:0032790">
    <property type="term" value="P:ribosome disassembly"/>
    <property type="evidence" value="ECO:0007669"/>
    <property type="project" value="TreeGrafter"/>
</dbReference>
<dbReference type="FunFam" id="3.10.20.80:FF:000001">
    <property type="entry name" value="Translation initiation factor IF-3"/>
    <property type="match status" value="1"/>
</dbReference>
<dbReference type="FunFam" id="3.30.110.10:FF:000001">
    <property type="entry name" value="Translation initiation factor IF-3"/>
    <property type="match status" value="1"/>
</dbReference>
<dbReference type="Gene3D" id="3.30.110.10">
    <property type="entry name" value="Translation initiation factor 3 (IF-3), C-terminal domain"/>
    <property type="match status" value="1"/>
</dbReference>
<dbReference type="Gene3D" id="3.10.20.80">
    <property type="entry name" value="Translation initiation factor 3 (IF-3), N-terminal domain"/>
    <property type="match status" value="1"/>
</dbReference>
<dbReference type="HAMAP" id="MF_00080">
    <property type="entry name" value="IF_3"/>
    <property type="match status" value="1"/>
</dbReference>
<dbReference type="InterPro" id="IPR036788">
    <property type="entry name" value="T_IF-3_C_sf"/>
</dbReference>
<dbReference type="InterPro" id="IPR036787">
    <property type="entry name" value="T_IF-3_N_sf"/>
</dbReference>
<dbReference type="InterPro" id="IPR019813">
    <property type="entry name" value="Translation_initiation_fac3_CS"/>
</dbReference>
<dbReference type="InterPro" id="IPR001288">
    <property type="entry name" value="Translation_initiation_fac_3"/>
</dbReference>
<dbReference type="InterPro" id="IPR019815">
    <property type="entry name" value="Translation_initiation_fac_3_C"/>
</dbReference>
<dbReference type="InterPro" id="IPR019814">
    <property type="entry name" value="Translation_initiation_fac_3_N"/>
</dbReference>
<dbReference type="NCBIfam" id="TIGR00168">
    <property type="entry name" value="infC"/>
    <property type="match status" value="1"/>
</dbReference>
<dbReference type="PANTHER" id="PTHR10938">
    <property type="entry name" value="TRANSLATION INITIATION FACTOR IF-3"/>
    <property type="match status" value="1"/>
</dbReference>
<dbReference type="PANTHER" id="PTHR10938:SF0">
    <property type="entry name" value="TRANSLATION INITIATION FACTOR IF-3, MITOCHONDRIAL"/>
    <property type="match status" value="1"/>
</dbReference>
<dbReference type="Pfam" id="PF00707">
    <property type="entry name" value="IF3_C"/>
    <property type="match status" value="1"/>
</dbReference>
<dbReference type="Pfam" id="PF05198">
    <property type="entry name" value="IF3_N"/>
    <property type="match status" value="1"/>
</dbReference>
<dbReference type="SUPFAM" id="SSF55200">
    <property type="entry name" value="Translation initiation factor IF3, C-terminal domain"/>
    <property type="match status" value="1"/>
</dbReference>
<dbReference type="SUPFAM" id="SSF54364">
    <property type="entry name" value="Translation initiation factor IF3, N-terminal domain"/>
    <property type="match status" value="1"/>
</dbReference>
<dbReference type="PROSITE" id="PS00938">
    <property type="entry name" value="IF3"/>
    <property type="match status" value="1"/>
</dbReference>
<accession>B8DPN1</accession>
<reference key="1">
    <citation type="submission" date="2008-10" db="EMBL/GenBank/DDBJ databases">
        <title>Complete sequence of Desulfovibrio vulgaris str. 'Miyazaki F'.</title>
        <authorList>
            <person name="Lucas S."/>
            <person name="Copeland A."/>
            <person name="Lapidus A."/>
            <person name="Glavina del Rio T."/>
            <person name="Dalin E."/>
            <person name="Tice H."/>
            <person name="Bruce D."/>
            <person name="Goodwin L."/>
            <person name="Pitluck S."/>
            <person name="Sims D."/>
            <person name="Brettin T."/>
            <person name="Detter J.C."/>
            <person name="Han C."/>
            <person name="Larimer F."/>
            <person name="Land M."/>
            <person name="Hauser L."/>
            <person name="Kyrpides N."/>
            <person name="Mikhailova N."/>
            <person name="Hazen T.C."/>
            <person name="Richardson P."/>
        </authorList>
    </citation>
    <scope>NUCLEOTIDE SEQUENCE [LARGE SCALE GENOMIC DNA]</scope>
    <source>
        <strain>DSM 19637 / Miyazaki F</strain>
    </source>
</reference>
<protein>
    <recommendedName>
        <fullName evidence="1">Translation initiation factor IF-3</fullName>
    </recommendedName>
</protein>
<keyword id="KW-0963">Cytoplasm</keyword>
<keyword id="KW-0396">Initiation factor</keyword>
<keyword id="KW-0648">Protein biosynthesis</keyword>
<name>IF3_NITV9</name>